<name>PLA2R_RABIT</name>
<evidence type="ECO:0000250" key="1"/>
<evidence type="ECO:0000250" key="2">
    <source>
        <dbReference type="UniProtKB" id="Q13018"/>
    </source>
</evidence>
<evidence type="ECO:0000250" key="3">
    <source>
        <dbReference type="UniProtKB" id="Q62028"/>
    </source>
</evidence>
<evidence type="ECO:0000255" key="4"/>
<evidence type="ECO:0000255" key="5">
    <source>
        <dbReference type="PROSITE-ProRule" id="PRU00040"/>
    </source>
</evidence>
<evidence type="ECO:0000255" key="6">
    <source>
        <dbReference type="PROSITE-ProRule" id="PRU00174"/>
    </source>
</evidence>
<evidence type="ECO:0000255" key="7">
    <source>
        <dbReference type="PROSITE-ProRule" id="PRU00479"/>
    </source>
</evidence>
<evidence type="ECO:0000269" key="8">
    <source>
    </source>
</evidence>
<evidence type="ECO:0000269" key="9">
    <source>
    </source>
</evidence>
<keyword id="KW-1003">Cell membrane</keyword>
<keyword id="KW-0903">Direct protein sequencing</keyword>
<keyword id="KW-1015">Disulfide bond</keyword>
<keyword id="KW-0254">Endocytosis</keyword>
<keyword id="KW-0325">Glycoprotein</keyword>
<keyword id="KW-0430">Lectin</keyword>
<keyword id="KW-0472">Membrane</keyword>
<keyword id="KW-0675">Receptor</keyword>
<keyword id="KW-1185">Reference proteome</keyword>
<keyword id="KW-0677">Repeat</keyword>
<keyword id="KW-0964">Secreted</keyword>
<keyword id="KW-0732">Signal</keyword>
<keyword id="KW-0812">Transmembrane</keyword>
<keyword id="KW-1133">Transmembrane helix</keyword>
<protein>
    <recommendedName>
        <fullName>Secretory phospholipase A2 receptor</fullName>
        <shortName>PLA2-R</shortName>
        <shortName>PLA2R</shortName>
    </recommendedName>
    <alternativeName>
        <fullName>180 kDa secretory phospholipase A2 receptor</fullName>
    </alternativeName>
    <alternativeName>
        <fullName>M-type receptor</fullName>
    </alternativeName>
    <component>
        <recommendedName>
            <fullName>Soluble secretory phospholipase A2 receptor</fullName>
            <shortName>Soluble PLA2-R</shortName>
            <shortName>Soluble PLA2R</shortName>
        </recommendedName>
    </component>
</protein>
<reference key="1">
    <citation type="journal article" date="1994" name="J. Biol. Chem.">
        <title>Cloning and expression of a membrane receptor for secretory phospholipases A2.</title>
        <authorList>
            <person name="Lambeau G."/>
            <person name="Ancian P."/>
            <person name="Barhanin J."/>
            <person name="Lazdunski M."/>
        </authorList>
    </citation>
    <scope>NUCLEOTIDE SEQUENCE [MRNA]</scope>
    <scope>PARTIAL PROTEIN SEQUENCE</scope>
    <source>
        <tissue>Skeletal muscle</tissue>
    </source>
</reference>
<reference key="2">
    <citation type="journal article" date="1995" name="Biochemistry">
        <title>Multifunctional activity of the extracellular domain of the M-type (180 kDa) membrane receptor for secretory phospholipases A2.</title>
        <authorList>
            <person name="Ancian P."/>
            <person name="Lambeau G."/>
            <person name="Lazdunski M."/>
        </authorList>
    </citation>
    <scope>FUNCTION</scope>
</reference>
<reference key="3">
    <citation type="journal article" date="1996" name="J. Biol. Chem.">
        <title>Endocytic properties of the M-type 180-kDa receptor for secretory phospholipases A2.</title>
        <authorList>
            <person name="Zvaritch E."/>
            <person name="Lambeau G."/>
            <person name="Lazdunski M."/>
        </authorList>
    </citation>
    <scope>FUNCTION</scope>
    <scope>SUBCELLULAR LOCATION</scope>
    <scope>MUTAGENESIS OF 1432-ASN--THR-1438; SER-1433; 1434-TYR-TYR-1435; PRO-1436 AND SER-1452</scope>
</reference>
<organism>
    <name type="scientific">Oryctolagus cuniculus</name>
    <name type="common">Rabbit</name>
    <dbReference type="NCBI Taxonomy" id="9986"/>
    <lineage>
        <taxon>Eukaryota</taxon>
        <taxon>Metazoa</taxon>
        <taxon>Chordata</taxon>
        <taxon>Craniata</taxon>
        <taxon>Vertebrata</taxon>
        <taxon>Euteleostomi</taxon>
        <taxon>Mammalia</taxon>
        <taxon>Eutheria</taxon>
        <taxon>Euarchontoglires</taxon>
        <taxon>Glires</taxon>
        <taxon>Lagomorpha</taxon>
        <taxon>Leporidae</taxon>
        <taxon>Oryctolagus</taxon>
    </lineage>
</organism>
<dbReference type="EMBL" id="U03455">
    <property type="protein sequence ID" value="AAC48402.1"/>
    <property type="molecule type" value="mRNA"/>
</dbReference>
<dbReference type="PIR" id="A49707">
    <property type="entry name" value="A49707"/>
</dbReference>
<dbReference type="RefSeq" id="NP_001075803.1">
    <property type="nucleotide sequence ID" value="NM_001082334.1"/>
</dbReference>
<dbReference type="SMR" id="P49260"/>
<dbReference type="FunCoup" id="P49260">
    <property type="interactions" value="17"/>
</dbReference>
<dbReference type="STRING" id="9986.ENSOCUP00000012759"/>
<dbReference type="GlyCosmos" id="P49260">
    <property type="glycosylation" value="4 sites, No reported glycans"/>
</dbReference>
<dbReference type="PaxDb" id="9986-ENSOCUP00000012759"/>
<dbReference type="GeneID" id="100009180"/>
<dbReference type="KEGG" id="ocu:100009180"/>
<dbReference type="CTD" id="22925"/>
<dbReference type="eggNOG" id="KOG4297">
    <property type="taxonomic scope" value="Eukaryota"/>
</dbReference>
<dbReference type="InParanoid" id="P49260"/>
<dbReference type="OrthoDB" id="5858677at2759"/>
<dbReference type="Proteomes" id="UP000001811">
    <property type="component" value="Unplaced"/>
</dbReference>
<dbReference type="GO" id="GO:0005576">
    <property type="term" value="C:extracellular region"/>
    <property type="evidence" value="ECO:0007669"/>
    <property type="project" value="UniProtKB-SubCell"/>
</dbReference>
<dbReference type="GO" id="GO:0005886">
    <property type="term" value="C:plasma membrane"/>
    <property type="evidence" value="ECO:0000250"/>
    <property type="project" value="UniProtKB"/>
</dbReference>
<dbReference type="GO" id="GO:0030246">
    <property type="term" value="F:carbohydrate binding"/>
    <property type="evidence" value="ECO:0007669"/>
    <property type="project" value="UniProtKB-KW"/>
</dbReference>
<dbReference type="GO" id="GO:0043274">
    <property type="term" value="F:phospholipase binding"/>
    <property type="evidence" value="ECO:0000250"/>
    <property type="project" value="UniProtKB"/>
</dbReference>
<dbReference type="GO" id="GO:0038023">
    <property type="term" value="F:signaling receptor activity"/>
    <property type="evidence" value="ECO:0000250"/>
    <property type="project" value="UniProtKB"/>
</dbReference>
<dbReference type="GO" id="GO:0090403">
    <property type="term" value="P:oxidative stress-induced premature senescence"/>
    <property type="evidence" value="ECO:0000250"/>
    <property type="project" value="UniProtKB"/>
</dbReference>
<dbReference type="GO" id="GO:0090238">
    <property type="term" value="P:positive regulation of arachidonate secretion"/>
    <property type="evidence" value="ECO:0000250"/>
    <property type="project" value="UniProtKB"/>
</dbReference>
<dbReference type="GO" id="GO:0001819">
    <property type="term" value="P:positive regulation of cytokine production"/>
    <property type="evidence" value="ECO:0000250"/>
    <property type="project" value="UniProtKB"/>
</dbReference>
<dbReference type="GO" id="GO:0043517">
    <property type="term" value="P:positive regulation of DNA damage response, signal transduction by p53 class mediator"/>
    <property type="evidence" value="ECO:0000250"/>
    <property type="project" value="UniProtKB"/>
</dbReference>
<dbReference type="GO" id="GO:0072593">
    <property type="term" value="P:reactive oxygen species metabolic process"/>
    <property type="evidence" value="ECO:0000250"/>
    <property type="project" value="UniProtKB"/>
</dbReference>
<dbReference type="GO" id="GO:0006898">
    <property type="term" value="P:receptor-mediated endocytosis"/>
    <property type="evidence" value="ECO:0000250"/>
    <property type="project" value="UniProtKB"/>
</dbReference>
<dbReference type="GO" id="GO:0090399">
    <property type="term" value="P:replicative senescence"/>
    <property type="evidence" value="ECO:0000250"/>
    <property type="project" value="UniProtKB"/>
</dbReference>
<dbReference type="CDD" id="cd00037">
    <property type="entry name" value="CLECT"/>
    <property type="match status" value="8"/>
</dbReference>
<dbReference type="CDD" id="cd00062">
    <property type="entry name" value="FN2"/>
    <property type="match status" value="1"/>
</dbReference>
<dbReference type="FunFam" id="2.10.10.10:FF:000001">
    <property type="entry name" value="Fibronectin 1a isoform 1"/>
    <property type="match status" value="1"/>
</dbReference>
<dbReference type="FunFam" id="2.80.10.50:FF:000039">
    <property type="entry name" value="Secretory phospholipase A2 receptor"/>
    <property type="match status" value="1"/>
</dbReference>
<dbReference type="FunFam" id="3.10.100.10:FF:000032">
    <property type="entry name" value="Secretory phospholipase A2 receptor"/>
    <property type="match status" value="1"/>
</dbReference>
<dbReference type="FunFam" id="3.10.100.10:FF:000038">
    <property type="entry name" value="Secretory phospholipase A2 receptor"/>
    <property type="match status" value="1"/>
</dbReference>
<dbReference type="FunFam" id="3.10.100.10:FF:000039">
    <property type="entry name" value="Secretory phospholipase A2 receptor"/>
    <property type="match status" value="1"/>
</dbReference>
<dbReference type="FunFam" id="3.10.100.10:FF:000040">
    <property type="entry name" value="Secretory phospholipase A2 receptor"/>
    <property type="match status" value="1"/>
</dbReference>
<dbReference type="FunFam" id="3.10.100.10:FF:000046">
    <property type="entry name" value="Secretory phospholipase A2 receptor"/>
    <property type="match status" value="1"/>
</dbReference>
<dbReference type="FunFam" id="3.10.100.10:FF:000050">
    <property type="entry name" value="Secretory phospholipase A2 receptor"/>
    <property type="match status" value="1"/>
</dbReference>
<dbReference type="FunFam" id="3.10.100.10:FF:000034">
    <property type="entry name" value="secretory phospholipase A2 receptor"/>
    <property type="match status" value="1"/>
</dbReference>
<dbReference type="FunFam" id="3.10.100.10:FF:000042">
    <property type="entry name" value="secretory phospholipase A2 receptor"/>
    <property type="match status" value="1"/>
</dbReference>
<dbReference type="Gene3D" id="2.80.10.50">
    <property type="match status" value="1"/>
</dbReference>
<dbReference type="Gene3D" id="2.10.10.10">
    <property type="entry name" value="Fibronectin, type II, collagen-binding"/>
    <property type="match status" value="1"/>
</dbReference>
<dbReference type="Gene3D" id="3.10.100.10">
    <property type="entry name" value="Mannose-Binding Protein A, subunit A"/>
    <property type="match status" value="8"/>
</dbReference>
<dbReference type="InterPro" id="IPR001304">
    <property type="entry name" value="C-type_lectin-like"/>
</dbReference>
<dbReference type="InterPro" id="IPR016186">
    <property type="entry name" value="C-type_lectin-like/link_sf"/>
</dbReference>
<dbReference type="InterPro" id="IPR050111">
    <property type="entry name" value="C-type_lectin/snaclec_domain"/>
</dbReference>
<dbReference type="InterPro" id="IPR018378">
    <property type="entry name" value="C-type_lectin_CS"/>
</dbReference>
<dbReference type="InterPro" id="IPR016187">
    <property type="entry name" value="CTDL_fold"/>
</dbReference>
<dbReference type="InterPro" id="IPR000562">
    <property type="entry name" value="FN_type2_dom"/>
</dbReference>
<dbReference type="InterPro" id="IPR036943">
    <property type="entry name" value="FN_type2_sf"/>
</dbReference>
<dbReference type="InterPro" id="IPR035992">
    <property type="entry name" value="Ricin_B-like_lectins"/>
</dbReference>
<dbReference type="InterPro" id="IPR000772">
    <property type="entry name" value="Ricin_B_lectin"/>
</dbReference>
<dbReference type="PANTHER" id="PTHR22803">
    <property type="entry name" value="MANNOSE, PHOSPHOLIPASE, LECTIN RECEPTOR RELATED"/>
    <property type="match status" value="1"/>
</dbReference>
<dbReference type="Pfam" id="PF24562">
    <property type="entry name" value="CysR_MRC2_N"/>
    <property type="match status" value="1"/>
</dbReference>
<dbReference type="Pfam" id="PF00040">
    <property type="entry name" value="fn2"/>
    <property type="match status" value="1"/>
</dbReference>
<dbReference type="Pfam" id="PF00059">
    <property type="entry name" value="Lectin_C"/>
    <property type="match status" value="8"/>
</dbReference>
<dbReference type="PRINTS" id="PR00013">
    <property type="entry name" value="FNTYPEII"/>
</dbReference>
<dbReference type="SMART" id="SM00034">
    <property type="entry name" value="CLECT"/>
    <property type="match status" value="8"/>
</dbReference>
<dbReference type="SMART" id="SM00059">
    <property type="entry name" value="FN2"/>
    <property type="match status" value="1"/>
</dbReference>
<dbReference type="SMART" id="SM00458">
    <property type="entry name" value="RICIN"/>
    <property type="match status" value="1"/>
</dbReference>
<dbReference type="SUPFAM" id="SSF56436">
    <property type="entry name" value="C-type lectin-like"/>
    <property type="match status" value="8"/>
</dbReference>
<dbReference type="SUPFAM" id="SSF50370">
    <property type="entry name" value="Ricin B-like lectins"/>
    <property type="match status" value="1"/>
</dbReference>
<dbReference type="PROSITE" id="PS00615">
    <property type="entry name" value="C_TYPE_LECTIN_1"/>
    <property type="match status" value="3"/>
</dbReference>
<dbReference type="PROSITE" id="PS50041">
    <property type="entry name" value="C_TYPE_LECTIN_2"/>
    <property type="match status" value="8"/>
</dbReference>
<dbReference type="PROSITE" id="PS00023">
    <property type="entry name" value="FN2_1"/>
    <property type="match status" value="1"/>
</dbReference>
<dbReference type="PROSITE" id="PS51092">
    <property type="entry name" value="FN2_2"/>
    <property type="match status" value="1"/>
</dbReference>
<dbReference type="PROSITE" id="PS50231">
    <property type="entry name" value="RICIN_B_LECTIN"/>
    <property type="match status" value="1"/>
</dbReference>
<comment type="function">
    <text evidence="8 9">Receptor for secretory phospholipase A2 (sPLA2). Also able to bind to snake PA2-like toxins. Although its precise function remains unclear, binding of sPLA2 to its receptor participates in both positive and negative regulation of sPLA2 functions as well as clearance of sPLA2. Binding of sPLA2-IB/PLA2G1B induces various effects depending on the cell type, such as activation of the mitogen-activated protein kinase (MAPK) cascade to induce cell proliferation, the production of lipid mediators, selective release of arachidonic acid in bone marrow-derived mast cells. In neutrophils, binding of sPLA2-IB/PLA2G1B can activate p38 MAPK to stimulate elastase release and cell adhesion. May be involved in responses in pro-inflammatory cytokine productions during endotoxic shock. Also has endocytic properties and rapidly internalizes sPLA2 ligands, which is particularly important for the clearance of extracellular sPLA2s to protect their potent enzymatic activities. The soluble secretory phospholipase A2 receptor form is circulating and acts as a negative regulator of sPLA2 functions by blocking the biological functions of sPLA2-IB/PLA2G1B and sPLA2-X/PLA2G10.</text>
</comment>
<comment type="subunit">
    <text evidence="2 3">Interacts with sPLA2-IB/PLA2G1B; this interaction mediates intracellular signaling as well as clearance of extracellular sPLA2-IB/PLA2G1B via endocytotic pathway (By similarity). Interacts with sPLA2-X/PLA2G10; this interaction mediates sPLA2-X/PLA2G10 clearance and inactivation (By similarity).</text>
</comment>
<comment type="subcellular location">
    <subcellularLocation>
        <location evidence="9">Cell membrane</location>
        <topology evidence="9">Single-pass type I membrane protein</topology>
    </subcellularLocation>
</comment>
<comment type="subcellular location">
    <molecule>Soluble secretory phospholipase A2 receptor</molecule>
    <subcellularLocation>
        <location evidence="1">Secreted</location>
    </subcellularLocation>
</comment>
<comment type="tissue specificity">
    <text>Lung, skeletal muscle, brain, kidney and heart.</text>
</comment>
<comment type="domain">
    <text evidence="1">C-type lectin domains 3-5 mediate the interaction with phospholipase PLA2G1B.</text>
</comment>
<comment type="domain">
    <text>The endocytosis signal probably mediates endocytosis via clathrin-coated pits.</text>
</comment>
<comment type="PTM">
    <text evidence="1">The secretory phospholipase A2 receptor form may be produced by the action of metalloproteinases. It contains all extracellular domains and only lacks transmembrane and cytosolic regions. It is however unclear whether this form is produced by proteolytic cleavage as suggested by some experiments, or by alternative splicing (By similarity).</text>
</comment>
<proteinExistence type="evidence at protein level"/>
<accession>P49260</accession>
<feature type="signal peptide" evidence="4">
    <location>
        <begin position="1"/>
        <end position="23"/>
    </location>
</feature>
<feature type="chain" id="PRO_0000017551" description="Secretory phospholipase A2 receptor">
    <location>
        <begin position="24"/>
        <end position="1458"/>
    </location>
</feature>
<feature type="chain" id="PRO_0000311254" description="Soluble secretory phospholipase A2 receptor" evidence="1">
    <location>
        <begin position="24"/>
        <end status="unknown"/>
    </location>
</feature>
<feature type="topological domain" description="Extracellular" evidence="4">
    <location>
        <begin position="24"/>
        <end position="1393"/>
    </location>
</feature>
<feature type="transmembrane region" description="Helical" evidence="4">
    <location>
        <begin position="1394"/>
        <end position="1416"/>
    </location>
</feature>
<feature type="topological domain" description="Cytoplasmic" evidence="4">
    <location>
        <begin position="1417"/>
        <end position="1458"/>
    </location>
</feature>
<feature type="domain" description="Ricin B-type lectin" evidence="6">
    <location>
        <begin position="49"/>
        <end position="113"/>
    </location>
</feature>
<feature type="domain" description="Fibronectin type-II" evidence="7">
    <location>
        <begin position="171"/>
        <end position="219"/>
    </location>
</feature>
<feature type="domain" description="C-type lectin 1" evidence="5">
    <location>
        <begin position="227"/>
        <end position="356"/>
    </location>
</feature>
<feature type="domain" description="C-type lectin 2" evidence="5">
    <location>
        <begin position="374"/>
        <end position="502"/>
    </location>
</feature>
<feature type="domain" description="C-type lectin 3" evidence="5">
    <location>
        <begin position="511"/>
        <end position="645"/>
    </location>
</feature>
<feature type="domain" description="C-type lectin 4" evidence="5">
    <location>
        <begin position="660"/>
        <end position="798"/>
    </location>
</feature>
<feature type="domain" description="C-type lectin 5" evidence="5">
    <location>
        <begin position="815"/>
        <end position="939"/>
    </location>
</feature>
<feature type="domain" description="C-type lectin 6" evidence="5">
    <location>
        <begin position="954"/>
        <end position="1098"/>
    </location>
</feature>
<feature type="domain" description="C-type lectin 7" evidence="5">
    <location>
        <begin position="1117"/>
        <end position="1231"/>
    </location>
</feature>
<feature type="domain" description="C-type lectin 8" evidence="5">
    <location>
        <begin position="1243"/>
        <end position="1376"/>
    </location>
</feature>
<feature type="short sequence motif" description="Endocytosis signal">
    <location>
        <begin position="1432"/>
        <end position="1438"/>
    </location>
</feature>
<feature type="glycosylation site" description="N-linked (GlcNAc...) asparagine" evidence="4">
    <location>
        <position position="91"/>
    </location>
</feature>
<feature type="glycosylation site" description="N-linked (GlcNAc...) asparagine" evidence="4">
    <location>
        <position position="408"/>
    </location>
</feature>
<feature type="glycosylation site" description="N-linked (GlcNAc...) asparagine" evidence="4">
    <location>
        <position position="431"/>
    </location>
</feature>
<feature type="glycosylation site" description="N-linked (GlcNAc...) asparagine" evidence="4">
    <location>
        <position position="452"/>
    </location>
</feature>
<feature type="disulfide bond" evidence="1">
    <location>
        <begin position="49"/>
        <end position="62"/>
    </location>
</feature>
<feature type="disulfide bond" evidence="1">
    <location>
        <begin position="87"/>
        <end position="104"/>
    </location>
</feature>
<feature type="disulfide bond" evidence="1">
    <location>
        <begin position="176"/>
        <end position="202"/>
    </location>
</feature>
<feature type="disulfide bond" evidence="1">
    <location>
        <begin position="190"/>
        <end position="217"/>
    </location>
</feature>
<feature type="disulfide bond" evidence="1">
    <location>
        <begin position="258"/>
        <end position="352"/>
    </location>
</feature>
<feature type="disulfide bond" evidence="1">
    <location>
        <begin position="328"/>
        <end position="344"/>
    </location>
</feature>
<feature type="disulfide bond" evidence="1">
    <location>
        <begin position="404"/>
        <end position="499"/>
    </location>
</feature>
<feature type="disulfide bond" evidence="1">
    <location>
        <begin position="476"/>
        <end position="491"/>
    </location>
</feature>
<feature type="disulfide bond" evidence="1">
    <location>
        <begin position="615"/>
        <end position="632"/>
    </location>
</feature>
<feature type="disulfide bond" evidence="1">
    <location>
        <begin position="697"/>
        <end position="794"/>
    </location>
</feature>
<feature type="disulfide bond" evidence="1">
    <location>
        <begin position="772"/>
        <end position="786"/>
    </location>
</feature>
<feature type="disulfide bond" evidence="1">
    <location>
        <begin position="838"/>
        <end position="935"/>
    </location>
</feature>
<feature type="disulfide bond" evidence="1">
    <location>
        <begin position="912"/>
        <end position="927"/>
    </location>
</feature>
<feature type="disulfide bond" evidence="1">
    <location>
        <begin position="1065"/>
        <end position="1085"/>
    </location>
</feature>
<feature type="disulfide bond" evidence="1">
    <location>
        <begin position="1207"/>
        <end position="1221"/>
    </location>
</feature>
<feature type="disulfide bond" evidence="1">
    <location>
        <begin position="1278"/>
        <end position="1373"/>
    </location>
</feature>
<feature type="disulfide bond" evidence="1">
    <location>
        <begin position="1350"/>
        <end position="1365"/>
    </location>
</feature>
<feature type="mutagenesis site" description="Abolishes receptor internalization." evidence="9">
    <location>
        <begin position="1432"/>
        <end position="1438"/>
    </location>
</feature>
<feature type="mutagenesis site" description="Increases receptor internalization." evidence="9">
    <original>S</original>
    <variation>P</variation>
    <location>
        <position position="1433"/>
    </location>
</feature>
<feature type="mutagenesis site" description="Reduces receptor internalization." evidence="9">
    <original>YY</original>
    <variation>AA</variation>
    <location>
        <begin position="1434"/>
        <end position="1435"/>
    </location>
</feature>
<feature type="mutagenesis site" description="Does not affect receptor internalization." evidence="9">
    <original>P</original>
    <variation>A</variation>
    <location>
        <position position="1436"/>
    </location>
</feature>
<feature type="mutagenesis site" description="Does not affect receptor internalization." evidence="9">
    <original>S</original>
    <variation>A</variation>
    <location>
        <position position="1452"/>
    </location>
</feature>
<sequence length="1458" mass="167200">MLLSLLLLLLLGAPRRCTEGAAAALSPERVLKWQEKGIFIIQSESLKSCIQAGKSVLTLESCKQPNKNMLWKWVSNQHLFNIGGSGCLGLNLSNPEQPLGLYECDSTHVSLRWRCNRKMITGPLQHTVQVKQDNIIVASGKRLHKWISYMSDSGDICQHVHKDLYTRKGNAHGTPCMFPFQYNHQWHHECTREGRQDDSLWCATTSRYERDEKWGFCPDPTSAEVGCDAVWEKDLNSHICYQFNLLSSLSWSEAHSSCQMHGGALLSIVDEAEENFIRKQVSGEAVEVWTGLNQLDVNAGWQWSDGTPLSYLNWSPEISFEPFVEYHCGTFNSFMPRAWRSRNCESTLPYICKKYLNHVDDEIVEKDAWKYYATDCEPGWAPYHRNCYKLQKEEKTWNEALHSCLSSNSTLIDIGSLAEVEFLVTLLGNENASETWIGLSSNTFPVSFEWSNGSSVIFTNWHTLEPQIFPNRSQLCVSAEQSEGHWKVTDCEETHFYVCKKPGHVLSDAESGCQEGWERHGGFCYKIDTVLRSFDHASSGYYCPPALVTIADRFEQAFITSLISSVVNMKDSYFWIALQDQNDTGEYTWKTAGQKSEPVQYTHWNAHQPRSSGGCVAIRGRNPIGRWEVKDCVHFKAMSLCKQPVETREKMEHEERWPFHPCYLDWESQPGLASCFKVFHSEKVLMKRTWREAEAFCEEFGAHLASFAHIEEENFVNELLHPKFNRSEERQFWIGFNKRNPLNAGSWEWSDGTPVISSFLDNNYFGEDTRNCAVYKANKTLLPLHCGSKREWICKIPRDVRPKIPSWYQYDAPWLFHQDAEYLFYPHSSEWSSFEFVCGWLRSDILTIHSAHEQEFILSKIKALSKYGANWWIGLQEETANDELRWRDGTPVIYQNWDKERDRSMNNQSQRCAFISSITGLWDREECSVSMPSICKRKTFWVIEKEKDTPKQHGTCPKGWLYFDYKCLLVNVPKDPSNWKNWTQARDFCFDEGGTLVAIESEVEQAFITMNLFGQTTNVWIGLQNDDYEKWLNGNPVAYSNWSPSDIINIPSYNTTADQKPIPLCALLSSNPNFHFTGKWYFEDCGKEGYGFVCEKIQDSAGHEVNTSIMDPIPNTLEYGNRTYKIINANMTWYAAIKSCQLHGAELVSITDQYHQSFLTVILSRLGHAHWIGLFTADNGLHFDWSDGTKSSFTFWKDEDSSFLGDCVFADTSGRWHSTACESFLQGAICHVPTETRPFEHPELCSETSIPWIKFKSNCYSFSTVLHSASFEAAHEFCKKEGSNLLTIKDEAENSFLLEEPFAFGASVQMVWLNAQFDNETVKWLDGTPADQSNWGIRKPDMAHFEPHQCLALRIPEGVWQLSPCQKNMGFICKMKADIHTVKEHPGKGPSHSIVPLAVALTLVVILAIITLSFYIYKQNKGFFRRLAGVGNSYYPTTNFSTIHLEENILISDLEKND</sequence>
<gene>
    <name type="primary">PLA2R1</name>
</gene>